<comment type="function">
    <text evidence="1 2 3">Participates in replication and packaging of the viral genome. Plays a crucial role, together with NSP5, in the formation of virus factories (viroplasms) which are large inclusions in the host cytoplasm where replication intermediates are assembled and viral RNA replication takes place (PubMed:14993647). Displays ssRNA binding, NTPase, RNA triphosphatase (RTPase) and ATP-independent helix-unwinding activities (PubMed:22811529). The unwinding activity may prepare and organize plus-strand RNAs for packaging and replication by removing interfering secondary structures (PubMed:22811529). The RTPase activity plays a role in the removal of the gamma-phosphate from the rotavirus RNA minus strands of dsRNA genome segments (PubMed:22811529). Participates in the selective exclusion of host proteins from stress granules (SG) and P bodies (PB). Also participates in the sequestration of these remodeled organelles in viral factories (By similarity).</text>
</comment>
<comment type="cofactor">
    <cofactor evidence="1">
        <name>Mg(2+)</name>
        <dbReference type="ChEBI" id="CHEBI:18420"/>
    </cofactor>
</comment>
<comment type="subunit">
    <text evidence="1 2 3">Homooctamer (PubMed:22811529). Interacts with VP1; this interaction is weak. Interacts with NSP5; this interaction leads to up-regulation of NSP5 phosphorylation and formation of viral factories (PubMed:14993647). Interacts with host DCP1A, DCP1B, DDX6, EDC4 and EIF2S1/eIF2-alpha; these interactions are probably part of the sequestration of some host SGs and PBs proteins in viral factories (By similarity).</text>
</comment>
<comment type="subcellular location">
    <subcellularLocation>
        <location evidence="1">Host cytoplasm</location>
    </subcellularLocation>
    <text evidence="1">Found in spherical cytoplasmic structures, called viral factories, that appear early after infection and are the site of viral replication and packaging.</text>
</comment>
<comment type="similarity">
    <text evidence="1">Belongs to the rotavirus NSP2 family.</text>
</comment>
<sequence>MAELACFCYPHLENDSYRFIPFNSLAIKCMLTAKVDKKDQDKFYNSIIYGIAPPPQFKKRYNTSDNSRGMNYETSMFNKVAALICEALNSIKVTQSDVASVLSKIVSVRHLENLVLRRENHQDVLFHSKELLLKSVLIAIGHSKEIETTATAEGGEIVFQNAAFTMWKLTYLEHKLMPILDQNFIEYKITLNEDKPISESHVKELIAELRWQYNKFAVITHGKGHYRVVKYSSVANHADRVYATFKSNNKNGNMIEFNLLDQRIIWQNWYAFTSSMKQGNTLEICKKLLFQKMKRESNPFKGLSTDRKMDEVSQIGI</sequence>
<accession>P03537</accession>
<organismHost>
    <name type="scientific">Macaca mulatta</name>
    <name type="common">Rhesus macaque</name>
    <dbReference type="NCBI Taxonomy" id="9544"/>
</organismHost>
<proteinExistence type="evidence at protein level"/>
<organism>
    <name type="scientific">Rotavirus A (strain RVA/SA11-Both/G3P5B[2])</name>
    <name type="common">RV-A</name>
    <name type="synonym">Simian Agent 11 (strain Both)</name>
    <dbReference type="NCBI Taxonomy" id="37137"/>
    <lineage>
        <taxon>Viruses</taxon>
        <taxon>Riboviria</taxon>
        <taxon>Orthornavirae</taxon>
        <taxon>Duplornaviricota</taxon>
        <taxon>Resentoviricetes</taxon>
        <taxon>Reovirales</taxon>
        <taxon>Sedoreoviridae</taxon>
        <taxon>Rotavirus</taxon>
        <taxon>Rotavirus A</taxon>
    </lineage>
</organism>
<protein>
    <recommendedName>
        <fullName evidence="1">Non-structural protein 2</fullName>
        <shortName evidence="1">NSP2</shortName>
        <ecNumber evidence="1">3.6.4.-</ecNumber>
    </recommendedName>
    <alternativeName>
        <fullName evidence="1">NCVP3</fullName>
    </alternativeName>
    <alternativeName>
        <fullName evidence="1">Non-structural RNA-binding protein 35</fullName>
        <shortName evidence="1">NS35</shortName>
    </alternativeName>
</protein>
<keyword id="KW-0067">ATP-binding</keyword>
<keyword id="KW-1035">Host cytoplasm</keyword>
<keyword id="KW-0378">Hydrolase</keyword>
<keyword id="KW-0460">Magnesium</keyword>
<keyword id="KW-0479">Metal-binding</keyword>
<keyword id="KW-0547">Nucleotide-binding</keyword>
<keyword id="KW-1185">Reference proteome</keyword>
<keyword id="KW-0694">RNA-binding</keyword>
<feature type="chain" id="PRO_0000149550" description="Non-structural protein 2">
    <location>
        <begin position="1"/>
        <end position="317"/>
    </location>
</feature>
<feature type="region of interest" description="RNA-binding" evidence="1">
    <location>
        <begin position="205"/>
        <end position="241"/>
    </location>
</feature>
<feature type="active site" description="For NTPase and RTPase activities" evidence="1 3">
    <location>
        <position position="225"/>
    </location>
</feature>
<feature type="binding site" evidence="1">
    <location>
        <begin position="107"/>
        <end position="109"/>
    </location>
    <ligand>
        <name>ATP</name>
        <dbReference type="ChEBI" id="CHEBI:30616"/>
    </ligand>
</feature>
<feature type="binding site" evidence="1">
    <location>
        <position position="188"/>
    </location>
    <ligand>
        <name>ATP</name>
        <dbReference type="ChEBI" id="CHEBI:30616"/>
    </ligand>
</feature>
<feature type="binding site" evidence="1">
    <location>
        <begin position="221"/>
        <end position="223"/>
    </location>
    <ligand>
        <name>ATP</name>
        <dbReference type="ChEBI" id="CHEBI:30616"/>
    </ligand>
</feature>
<feature type="binding site" evidence="1">
    <location>
        <position position="227"/>
    </location>
    <ligand>
        <name>ATP</name>
        <dbReference type="ChEBI" id="CHEBI:30616"/>
    </ligand>
</feature>
<reference key="1">
    <citation type="journal article" date="1982" name="Nucleic Acids Res.">
        <title>A general strategy for cloning double-stranded RNA: nucleotide sequence of the Simian-11 rotavirus gene 8.</title>
        <authorList>
            <person name="Both G.W."/>
            <person name="Bellamy A.R."/>
            <person name="Street J.E."/>
            <person name="Siegman L.J."/>
        </authorList>
    </citation>
    <scope>NUCLEOTIDE SEQUENCE [GENOMIC RNA]</scope>
</reference>
<reference key="2">
    <citation type="journal article" date="1999" name="J. Virol.">
        <title>Multimers formed by the rotavirus nonstructural protein NSP2 bind to RNA and have nucleoside triphosphatase activity.</title>
        <authorList>
            <person name="Taraporewala Z.F."/>
            <person name="Chen D."/>
            <person name="Patton J.T."/>
        </authorList>
    </citation>
    <scope>COFACTOR</scope>
    <scope>FUNCTION</scope>
</reference>
<reference key="3">
    <citation type="journal article" date="2004" name="J. Gen. Virol.">
        <title>Characterization of rotavirus NSP2/NSP5 interactions and the dynamics of viroplasm formation.</title>
        <authorList>
            <person name="Eichwald C."/>
            <person name="Rodriguez J.F."/>
            <person name="Burrone O.R."/>
        </authorList>
    </citation>
    <scope>FUNCTION</scope>
    <scope>INTERACTION WITH NSP5</scope>
    <scope>SUBCELLULAR LOCATION</scope>
</reference>
<reference key="4">
    <citation type="journal article" date="2012" name="J. Virol.">
        <title>Crystallographic Analysis of Rotavirus NSP2-RNA Complex Reveals Specific Recognition of 5' GG Sequence for RTPase Activity.</title>
        <authorList>
            <person name="Hu L."/>
            <person name="Chow D.C."/>
            <person name="Patton J.T."/>
            <person name="Palzkill T."/>
            <person name="Estes M.K."/>
            <person name="Prasad B.V."/>
        </authorList>
    </citation>
    <scope>FUNCTION</scope>
    <scope>SUBUNIT</scope>
    <scope>CATALYTIC ACTIVITY</scope>
</reference>
<evidence type="ECO:0000255" key="1">
    <source>
        <dbReference type="HAMAP-Rule" id="MF_04089"/>
    </source>
</evidence>
<evidence type="ECO:0000269" key="2">
    <source>
    </source>
</evidence>
<evidence type="ECO:0000269" key="3">
    <source>
    </source>
</evidence>
<dbReference type="EC" id="3.6.4.-" evidence="1"/>
<dbReference type="EMBL" id="J02353">
    <property type="protein sequence ID" value="AAA47293.1"/>
    <property type="molecule type" value="Genomic_RNA"/>
</dbReference>
<dbReference type="PIR" id="A04144">
    <property type="entry name" value="WMXR3S"/>
</dbReference>
<dbReference type="SMR" id="P03537"/>
<dbReference type="Proteomes" id="UP000007180">
    <property type="component" value="Genome"/>
</dbReference>
<dbReference type="GO" id="GO:0030430">
    <property type="term" value="C:host cell cytoplasm"/>
    <property type="evidence" value="ECO:0007669"/>
    <property type="project" value="UniProtKB-SubCell"/>
</dbReference>
<dbReference type="GO" id="GO:0005524">
    <property type="term" value="F:ATP binding"/>
    <property type="evidence" value="ECO:0007669"/>
    <property type="project" value="UniProtKB-KW"/>
</dbReference>
<dbReference type="GO" id="GO:0046872">
    <property type="term" value="F:metal ion binding"/>
    <property type="evidence" value="ECO:0007669"/>
    <property type="project" value="UniProtKB-UniRule"/>
</dbReference>
<dbReference type="GO" id="GO:0004550">
    <property type="term" value="F:nucleoside diphosphate kinase activity"/>
    <property type="evidence" value="ECO:0007669"/>
    <property type="project" value="InterPro"/>
</dbReference>
<dbReference type="GO" id="GO:0017111">
    <property type="term" value="F:ribonucleoside triphosphate phosphatase activity"/>
    <property type="evidence" value="ECO:0007669"/>
    <property type="project" value="InterPro"/>
</dbReference>
<dbReference type="GO" id="GO:0003723">
    <property type="term" value="F:RNA binding"/>
    <property type="evidence" value="ECO:0007669"/>
    <property type="project" value="UniProtKB-UniRule"/>
</dbReference>
<dbReference type="GO" id="GO:0019079">
    <property type="term" value="P:viral genome replication"/>
    <property type="evidence" value="ECO:0007669"/>
    <property type="project" value="UniProtKB-UniRule"/>
</dbReference>
<dbReference type="Gene3D" id="3.30.428.20">
    <property type="entry name" value="Rotavirus NSP2 fragment, C-terminal domain"/>
    <property type="match status" value="1"/>
</dbReference>
<dbReference type="Gene3D" id="3.90.1400.10">
    <property type="entry name" value="Rotavirus NSP2 fragment, N-terminal domain"/>
    <property type="match status" value="1"/>
</dbReference>
<dbReference type="HAMAP" id="MF_04089">
    <property type="entry name" value="ROTA_NSP2"/>
    <property type="match status" value="1"/>
</dbReference>
<dbReference type="InterPro" id="IPR048306">
    <property type="entry name" value="Rota_NS35_C"/>
</dbReference>
<dbReference type="InterPro" id="IPR048573">
    <property type="entry name" value="Rota_NS35_N"/>
</dbReference>
<dbReference type="InterPro" id="IPR003668">
    <property type="entry name" value="Rotavirus_NSP2"/>
</dbReference>
<dbReference type="InterPro" id="IPR024076">
    <property type="entry name" value="Rotavirus_NSP2_C"/>
</dbReference>
<dbReference type="InterPro" id="IPR024068">
    <property type="entry name" value="Rotavirus_NSP2_N"/>
</dbReference>
<dbReference type="Pfam" id="PF02509">
    <property type="entry name" value="Rota_NS35_C"/>
    <property type="match status" value="1"/>
</dbReference>
<dbReference type="Pfam" id="PF21067">
    <property type="entry name" value="Rota_NS35_N"/>
    <property type="match status" value="1"/>
</dbReference>
<dbReference type="SUPFAM" id="SSF75347">
    <property type="entry name" value="Rotavirus NSP2 fragment, C-terminal domain"/>
    <property type="match status" value="1"/>
</dbReference>
<dbReference type="SUPFAM" id="SSF75574">
    <property type="entry name" value="Rotavirus NSP2 fragment, N-terminal domain"/>
    <property type="match status" value="1"/>
</dbReference>
<name>NSP2_ROTS1</name>